<feature type="signal peptide" evidence="1">
    <location>
        <begin position="1"/>
        <end position="21"/>
    </location>
</feature>
<feature type="chain" id="PRO_0000422094" description="Interferon lambda-4">
    <location>
        <begin position="22"/>
        <end position="179"/>
    </location>
</feature>
<feature type="region of interest" description="Disordered" evidence="2">
    <location>
        <begin position="130"/>
        <end position="149"/>
    </location>
</feature>
<feature type="splice variant" id="VSP_046392" description="In isoform 4." evidence="4">
    <location>
        <begin position="51"/>
        <end position="122"/>
    </location>
</feature>
<feature type="splice variant" id="VSP_046393" description="In isoform 3." evidence="4">
    <location>
        <begin position="75"/>
        <end position="122"/>
    </location>
</feature>
<feature type="splice variant" id="VSP_046394" description="In isoform 2." evidence="4">
    <original>LELARPGSSRKVPGAQKRRHKPRRADSPRCRKASVVFNLLRLLTWELRLAAHSGPCL</original>
    <variation>VSDGRAPPPLSPASFSASSGPRRAPALCQSVLLSGKTHPDRSRVLWVS</variation>
    <location>
        <begin position="123"/>
        <end position="179"/>
    </location>
</feature>
<feature type="sequence conflict" description="In Ref. 1; AFQ38550." evidence="5" ref="1">
    <original>L</original>
    <variation>P</variation>
    <location>
        <position position="161"/>
    </location>
</feature>
<name>IFNL4_HUMAN</name>
<organism>
    <name type="scientific">Homo sapiens</name>
    <name type="common">Human</name>
    <dbReference type="NCBI Taxonomy" id="9606"/>
    <lineage>
        <taxon>Eukaryota</taxon>
        <taxon>Metazoa</taxon>
        <taxon>Chordata</taxon>
        <taxon>Craniata</taxon>
        <taxon>Vertebrata</taxon>
        <taxon>Euteleostomi</taxon>
        <taxon>Mammalia</taxon>
        <taxon>Eutheria</taxon>
        <taxon>Euarchontoglires</taxon>
        <taxon>Primates</taxon>
        <taxon>Haplorrhini</taxon>
        <taxon>Catarrhini</taxon>
        <taxon>Hominidae</taxon>
        <taxon>Homo</taxon>
    </lineage>
</organism>
<accession>K9M1U5</accession>
<accession>K9M1A5</accession>
<accession>K9M269</accession>
<accession>K9M2P7</accession>
<gene>
    <name type="primary">IFNL4</name>
</gene>
<dbReference type="EMBL" id="JN806225">
    <property type="protein sequence ID" value="AFQ38550.1"/>
    <property type="molecule type" value="mRNA"/>
</dbReference>
<dbReference type="EMBL" id="JN806226">
    <property type="protein sequence ID" value="AFQ38551.1"/>
    <property type="molecule type" value="mRNA"/>
</dbReference>
<dbReference type="EMBL" id="JN806233">
    <property type="protein sequence ID" value="AFQ38558.1"/>
    <property type="molecule type" value="mRNA"/>
</dbReference>
<dbReference type="EMBL" id="JN806234">
    <property type="protein sequence ID" value="AFQ38559.1"/>
    <property type="molecule type" value="mRNA"/>
</dbReference>
<dbReference type="EMBL" id="AC011445">
    <property type="status" value="NOT_ANNOTATED_CDS"/>
    <property type="molecule type" value="Genomic_DNA"/>
</dbReference>
<dbReference type="RefSeq" id="NP_001263183.2">
    <molecule id="K9M1U5-1"/>
    <property type="nucleotide sequence ID" value="NM_001276254.2"/>
</dbReference>
<dbReference type="PDB" id="9BPU">
    <property type="method" value="EM"/>
    <property type="resolution" value="3.26 A"/>
    <property type="chains" value="C=21-179"/>
</dbReference>
<dbReference type="PDBsum" id="9BPU"/>
<dbReference type="EMDB" id="EMD-44790"/>
<dbReference type="SMR" id="K9M1U5"/>
<dbReference type="ComplexPortal" id="CPX-6014">
    <property type="entry name" value="Interferon lambda receptor-ligand complex, IFNL4 variant"/>
</dbReference>
<dbReference type="FunCoup" id="K9M1U5">
    <property type="interactions" value="17"/>
</dbReference>
<dbReference type="BioMuta" id="IFNL4"/>
<dbReference type="MassIVE" id="K9M1U5"/>
<dbReference type="ABCD" id="K9M1U5">
    <property type="antibodies" value="2 sequenced antibodies"/>
</dbReference>
<dbReference type="DNASU" id="101180976"/>
<dbReference type="Ensembl" id="ENST00000710320.1">
    <molecule id="K9M1U5-3"/>
    <property type="protein sequence ID" value="ENSP00000518200.1"/>
    <property type="gene ID" value="ENSG00000292250.1"/>
</dbReference>
<dbReference type="Ensembl" id="ENST00000710321.1">
    <molecule id="K9M1U5-1"/>
    <property type="protein sequence ID" value="ENSP00000518201.1"/>
    <property type="gene ID" value="ENSG00000292250.1"/>
</dbReference>
<dbReference type="Ensembl" id="ENST00000710322.1">
    <molecule id="K9M1U5-4"/>
    <property type="protein sequence ID" value="ENSP00000518202.1"/>
    <property type="gene ID" value="ENSG00000292250.1"/>
</dbReference>
<dbReference type="GeneID" id="101180976"/>
<dbReference type="KEGG" id="hsa:101180976"/>
<dbReference type="MANE-Select" id="ENST00000710321.1">
    <property type="protein sequence ID" value="ENSP00000518201.1"/>
    <property type="RefSeq nucleotide sequence ID" value="NM_001276254.2"/>
    <property type="RefSeq protein sequence ID" value="NP_001263183.2"/>
</dbReference>
<dbReference type="AGR" id="HGNC:44480"/>
<dbReference type="CTD" id="101180976"/>
<dbReference type="DisGeNET" id="101180976"/>
<dbReference type="GeneCards" id="IFNL4"/>
<dbReference type="HGNC" id="HGNC:44480">
    <property type="gene designation" value="IFNL4"/>
</dbReference>
<dbReference type="MIM" id="615090">
    <property type="type" value="gene"/>
</dbReference>
<dbReference type="neXtProt" id="NX_K9M1U5"/>
<dbReference type="InParanoid" id="K9M1U5"/>
<dbReference type="PAN-GO" id="K9M1U5">
    <property type="GO annotations" value="4 GO annotations based on evolutionary models"/>
</dbReference>
<dbReference type="BioGRID-ORCS" id="101180976">
    <property type="hits" value="12 hits in 188 CRISPR screens"/>
</dbReference>
<dbReference type="Pharos" id="K9M1U5">
    <property type="development level" value="Tbio"/>
</dbReference>
<dbReference type="PRO" id="PR:K9M1U5"/>
<dbReference type="Proteomes" id="UP000005640">
    <property type="component" value="Unplaced"/>
</dbReference>
<dbReference type="RNAct" id="K9M1U5">
    <property type="molecule type" value="protein"/>
</dbReference>
<dbReference type="GO" id="GO:0005737">
    <property type="term" value="C:cytoplasm"/>
    <property type="evidence" value="ECO:0000314"/>
    <property type="project" value="UniProtKB"/>
</dbReference>
<dbReference type="GO" id="GO:0005615">
    <property type="term" value="C:extracellular space"/>
    <property type="evidence" value="ECO:0000314"/>
    <property type="project" value="UniProtKB"/>
</dbReference>
<dbReference type="GO" id="GO:0005125">
    <property type="term" value="F:cytokine activity"/>
    <property type="evidence" value="ECO:0000315"/>
    <property type="project" value="UniProtKB"/>
</dbReference>
<dbReference type="GO" id="GO:0005102">
    <property type="term" value="F:signaling receptor binding"/>
    <property type="evidence" value="ECO:0000318"/>
    <property type="project" value="GO_Central"/>
</dbReference>
<dbReference type="GO" id="GO:0098586">
    <property type="term" value="P:cellular response to virus"/>
    <property type="evidence" value="ECO:0000303"/>
    <property type="project" value="ComplexPortal"/>
</dbReference>
<dbReference type="GO" id="GO:0051607">
    <property type="term" value="P:defense response to virus"/>
    <property type="evidence" value="ECO:0000315"/>
    <property type="project" value="UniProtKB"/>
</dbReference>
<dbReference type="GO" id="GO:0045087">
    <property type="term" value="P:innate immune response"/>
    <property type="evidence" value="ECO:0000318"/>
    <property type="project" value="GO_Central"/>
</dbReference>
<dbReference type="GO" id="GO:0050778">
    <property type="term" value="P:positive regulation of immune response"/>
    <property type="evidence" value="ECO:0007669"/>
    <property type="project" value="InterPro"/>
</dbReference>
<dbReference type="GO" id="GO:0038196">
    <property type="term" value="P:type III interferon-mediated signaling pathway"/>
    <property type="evidence" value="ECO:0000303"/>
    <property type="project" value="ComplexPortal"/>
</dbReference>
<dbReference type="GO" id="GO:0007260">
    <property type="term" value="P:tyrosine phosphorylation of STAT protein"/>
    <property type="evidence" value="ECO:0000314"/>
    <property type="project" value="UniProtKB"/>
</dbReference>
<dbReference type="FunFam" id="1.20.1250.60:FF:000002">
    <property type="entry name" value="Interferon lambda-4"/>
    <property type="match status" value="1"/>
</dbReference>
<dbReference type="Gene3D" id="1.20.1250.60">
    <property type="entry name" value="Interferon lambda"/>
    <property type="match status" value="1"/>
</dbReference>
<dbReference type="InterPro" id="IPR038326">
    <property type="entry name" value="IFN-lambda_sf"/>
</dbReference>
<dbReference type="InterPro" id="IPR029177">
    <property type="entry name" value="INF_lambda"/>
</dbReference>
<dbReference type="PANTHER" id="PTHR31943:SF17">
    <property type="entry name" value="INTERFERON LAMBDA-4"/>
    <property type="match status" value="1"/>
</dbReference>
<dbReference type="PANTHER" id="PTHR31943">
    <property type="entry name" value="INTERLEUKIN-28 AND 29"/>
    <property type="match status" value="1"/>
</dbReference>
<dbReference type="Pfam" id="PF15177">
    <property type="entry name" value="IL28A"/>
    <property type="match status" value="1"/>
</dbReference>
<evidence type="ECO:0000255" key="1"/>
<evidence type="ECO:0000256" key="2">
    <source>
        <dbReference type="SAM" id="MobiDB-lite"/>
    </source>
</evidence>
<evidence type="ECO:0000269" key="3">
    <source>
    </source>
</evidence>
<evidence type="ECO:0000303" key="4">
    <source>
    </source>
</evidence>
<evidence type="ECO:0000305" key="5"/>
<sequence>MRPSVWAAVAAGLWVLCTVIAAAPRRCLLSHYRSLEPRTLAAAKALRDRYEEEALSWGQRNCSFRPRRDPPRPSSCARLRHVARGIADAQAVLSGLHRSELLPGAGPILELLAAAGRDVAACLELARPGSSRKVPGAQKRRHKPRRADSPRCRKASVVFNLLRLLTWELRLAAHSGPCL</sequence>
<proteinExistence type="evidence at protein level"/>
<keyword id="KW-0002">3D-structure</keyword>
<keyword id="KW-0025">Alternative splicing</keyword>
<keyword id="KW-0051">Antiviral defense</keyword>
<keyword id="KW-0202">Cytokine</keyword>
<keyword id="KW-0963">Cytoplasm</keyword>
<keyword id="KW-1185">Reference proteome</keyword>
<keyword id="KW-0964">Secreted</keyword>
<keyword id="KW-0732">Signal</keyword>
<protein>
    <recommendedName>
        <fullName>Interferon lambda-4</fullName>
        <shortName>IFN-lambda-4</shortName>
    </recommendedName>
</protein>
<comment type="function">
    <text evidence="3">Cytokine that may trigger an antiviral response activating the JAK-STAT pathway and up-regulating specifically some interferon-stimulated genes.</text>
</comment>
<comment type="subcellular location">
    <subcellularLocation>
        <location evidence="3">Cytoplasm</location>
    </subcellularLocation>
    <subcellularLocation>
        <location evidence="3">Secreted</location>
    </subcellularLocation>
</comment>
<comment type="alternative products">
    <event type="alternative splicing"/>
    <isoform>
        <id>K9M1U5-1</id>
        <name>1</name>
        <name>IFNL4</name>
        <name>p179</name>
        <sequence type="displayed"/>
    </isoform>
    <isoform>
        <id>K9M1U5-2</id>
        <name>2</name>
        <name>p170</name>
        <sequence type="described" ref="VSP_046394"/>
    </isoform>
    <isoform>
        <id>K9M1U5-3</id>
        <name>3</name>
        <name>p131</name>
        <sequence type="described" ref="VSP_046393"/>
    </isoform>
    <isoform>
        <id>K9M1U5-4</id>
        <name>4</name>
        <name>p107</name>
        <sequence type="described" ref="VSP_046392"/>
    </isoform>
    <text>Additional isoforms seem to exist. However, they may be produced at very low levels due to a premature stop codon in the mRNA, leading to nonsense-mediated mRNA decay.</text>
</comment>
<comment type="induction">
    <text evidence="3">Up-regulated by polyinosinic:polycytidylic acid (polyI:C) which mimics the double-stranded hepatitis C virus.</text>
</comment>
<comment type="polymorphism">
    <text evidence="3">A one-base insertion, introducing a frameshift at position 22, results in inactivation of the gene in a majority of the population. That polymorphism is a good marker for predicting spontaneous hepatitis C virus (HCV) clearance and the response to treatment of chronic hepatitis C. The allele producing a functional protein able to induce an antiviral response and to prevent HCV replication in cell cultures, is less frequent in human populations and is associated with impaired spontaneous clearance of HCV.</text>
</comment>
<comment type="miscellaneous">
    <molecule>Isoform 1</molecule>
    <text>Active form which is able to induce an antiviral response and prevent hepatitis C virus (HCV) replication in cell cultures.</text>
</comment>
<comment type="miscellaneous">
    <molecule>Isoform 2</molecule>
    <text evidence="5">Inactive form.</text>
</comment>
<comment type="miscellaneous">
    <molecule>Isoform 3</molecule>
    <text evidence="5">Inactive form unable to elicit an antiviral response.</text>
</comment>
<comment type="miscellaneous">
    <molecule>Isoform 4</molecule>
    <text evidence="5">Inactive form unable to elicit an antiviral response.</text>
</comment>
<comment type="similarity">
    <text evidence="5">Belongs to the lambda interferon family.</text>
</comment>
<comment type="caution">
    <text evidence="5">The reference genome assembly, GRCh37, describes the non-functional copy of that gene, frameshifted at position 22, that is more frequent in human populations.</text>
</comment>
<reference key="1">
    <citation type="journal article" date="2013" name="Nat. Genet.">
        <title>A variant upstream of IFNL3 (IL28B) creating a new interferon gene IFNL4 is associated with impaired clearance of hepatitis C virus.</title>
        <authorList>
            <person name="Prokunina-Olsson L."/>
            <person name="Muchmore B."/>
            <person name="Tang W."/>
            <person name="Pfeiffer R.M."/>
            <person name="Park H."/>
            <person name="Dickensheets H."/>
            <person name="Hergott D."/>
            <person name="Porter-Gill P."/>
            <person name="Mumy A."/>
            <person name="Kohaar I."/>
            <person name="Chen S."/>
            <person name="Brand N."/>
            <person name="Tarway M."/>
            <person name="Liu L."/>
            <person name="Sheikh F."/>
            <person name="Astemborski J."/>
            <person name="Bonkovsky H.L."/>
            <person name="Edlin B.R."/>
            <person name="Howell C.D."/>
            <person name="Morgan T.R."/>
            <person name="Thomas D.L."/>
            <person name="Rehermann B."/>
            <person name="Donnelly R.P."/>
            <person name="O'Brien T.R."/>
        </authorList>
    </citation>
    <scope>NUCLEOTIDE SEQUENCE [MRNA] (ISOFORMS 1; 2; 3 AND 4)</scope>
    <scope>FUNCTION</scope>
    <scope>POLYMORPHISM</scope>
    <scope>INDUCTION</scope>
    <scope>SUBCELLULAR LOCATION</scope>
</reference>
<reference key="2">
    <citation type="journal article" date="2004" name="Nature">
        <title>The DNA sequence and biology of human chromosome 19.</title>
        <authorList>
            <person name="Grimwood J."/>
            <person name="Gordon L.A."/>
            <person name="Olsen A.S."/>
            <person name="Terry A."/>
            <person name="Schmutz J."/>
            <person name="Lamerdin J.E."/>
            <person name="Hellsten U."/>
            <person name="Goodstein D."/>
            <person name="Couronne O."/>
            <person name="Tran-Gyamfi M."/>
            <person name="Aerts A."/>
            <person name="Altherr M."/>
            <person name="Ashworth L."/>
            <person name="Bajorek E."/>
            <person name="Black S."/>
            <person name="Branscomb E."/>
            <person name="Caenepeel S."/>
            <person name="Carrano A.V."/>
            <person name="Caoile C."/>
            <person name="Chan Y.M."/>
            <person name="Christensen M."/>
            <person name="Cleland C.A."/>
            <person name="Copeland A."/>
            <person name="Dalin E."/>
            <person name="Dehal P."/>
            <person name="Denys M."/>
            <person name="Detter J.C."/>
            <person name="Escobar J."/>
            <person name="Flowers D."/>
            <person name="Fotopulos D."/>
            <person name="Garcia C."/>
            <person name="Georgescu A.M."/>
            <person name="Glavina T."/>
            <person name="Gomez M."/>
            <person name="Gonzales E."/>
            <person name="Groza M."/>
            <person name="Hammon N."/>
            <person name="Hawkins T."/>
            <person name="Haydu L."/>
            <person name="Ho I."/>
            <person name="Huang W."/>
            <person name="Israni S."/>
            <person name="Jett J."/>
            <person name="Kadner K."/>
            <person name="Kimball H."/>
            <person name="Kobayashi A."/>
            <person name="Larionov V."/>
            <person name="Leem S.-H."/>
            <person name="Lopez F."/>
            <person name="Lou Y."/>
            <person name="Lowry S."/>
            <person name="Malfatti S."/>
            <person name="Martinez D."/>
            <person name="McCready P.M."/>
            <person name="Medina C."/>
            <person name="Morgan J."/>
            <person name="Nelson K."/>
            <person name="Nolan M."/>
            <person name="Ovcharenko I."/>
            <person name="Pitluck S."/>
            <person name="Pollard M."/>
            <person name="Popkie A.P."/>
            <person name="Predki P."/>
            <person name="Quan G."/>
            <person name="Ramirez L."/>
            <person name="Rash S."/>
            <person name="Retterer J."/>
            <person name="Rodriguez A."/>
            <person name="Rogers S."/>
            <person name="Salamov A."/>
            <person name="Salazar A."/>
            <person name="She X."/>
            <person name="Smith D."/>
            <person name="Slezak T."/>
            <person name="Solovyev V."/>
            <person name="Thayer N."/>
            <person name="Tice H."/>
            <person name="Tsai M."/>
            <person name="Ustaszewska A."/>
            <person name="Vo N."/>
            <person name="Wagner M."/>
            <person name="Wheeler J."/>
            <person name="Wu K."/>
            <person name="Xie G."/>
            <person name="Yang J."/>
            <person name="Dubchak I."/>
            <person name="Furey T.S."/>
            <person name="DeJong P."/>
            <person name="Dickson M."/>
            <person name="Gordon D."/>
            <person name="Eichler E.E."/>
            <person name="Pennacchio L.A."/>
            <person name="Richardson P."/>
            <person name="Stubbs L."/>
            <person name="Rokhsar D.S."/>
            <person name="Myers R.M."/>
            <person name="Rubin E.M."/>
            <person name="Lucas S.M."/>
        </authorList>
    </citation>
    <scope>NUCLEOTIDE SEQUENCE [LARGE SCALE GENOMIC DNA]</scope>
</reference>